<name>ABC16_GIBZE</name>
<dbReference type="EMBL" id="HG970332">
    <property type="protein sequence ID" value="SCB64403.1"/>
    <property type="molecule type" value="Genomic_DNA"/>
</dbReference>
<dbReference type="SMR" id="I1RF50"/>
<dbReference type="STRING" id="229533.A0A1C3YIK3"/>
<dbReference type="VEuPathDB" id="FungiDB:FGRAMPH1_01G05577"/>
<dbReference type="eggNOG" id="KOG0054">
    <property type="taxonomic scope" value="Eukaryota"/>
</dbReference>
<dbReference type="HOGENOM" id="CLU_000604_27_5_1"/>
<dbReference type="PHI-base" id="PHI:8222"/>
<dbReference type="Proteomes" id="UP000070720">
    <property type="component" value="Chromosome 1"/>
</dbReference>
<dbReference type="GO" id="GO:0005886">
    <property type="term" value="C:plasma membrane"/>
    <property type="evidence" value="ECO:0007669"/>
    <property type="project" value="UniProtKB-SubCell"/>
</dbReference>
<dbReference type="GO" id="GO:0140359">
    <property type="term" value="F:ABC-type transporter activity"/>
    <property type="evidence" value="ECO:0007669"/>
    <property type="project" value="InterPro"/>
</dbReference>
<dbReference type="GO" id="GO:0005524">
    <property type="term" value="F:ATP binding"/>
    <property type="evidence" value="ECO:0007669"/>
    <property type="project" value="UniProtKB-KW"/>
</dbReference>
<dbReference type="GO" id="GO:0016887">
    <property type="term" value="F:ATP hydrolysis activity"/>
    <property type="evidence" value="ECO:0007669"/>
    <property type="project" value="InterPro"/>
</dbReference>
<dbReference type="CDD" id="cd18579">
    <property type="entry name" value="ABC_6TM_ABCC_D1"/>
    <property type="match status" value="1"/>
</dbReference>
<dbReference type="CDD" id="cd18580">
    <property type="entry name" value="ABC_6TM_ABCC_D2"/>
    <property type="match status" value="1"/>
</dbReference>
<dbReference type="CDD" id="cd03250">
    <property type="entry name" value="ABCC_MRP_domain1"/>
    <property type="match status" value="1"/>
</dbReference>
<dbReference type="CDD" id="cd03244">
    <property type="entry name" value="ABCC_MRP_domain2"/>
    <property type="match status" value="1"/>
</dbReference>
<dbReference type="FunFam" id="1.20.1560.10:FF:000055">
    <property type="entry name" value="ABC multidrug transporter (Eurofung)"/>
    <property type="match status" value="1"/>
</dbReference>
<dbReference type="FunFam" id="1.20.1560.10:FF:000066">
    <property type="entry name" value="ABC multidrug transporter (Eurofung)"/>
    <property type="match status" value="1"/>
</dbReference>
<dbReference type="FunFam" id="3.40.50.300:FF:000838">
    <property type="entry name" value="ABC multidrug transporter (Eurofung)"/>
    <property type="match status" value="1"/>
</dbReference>
<dbReference type="FunFam" id="3.40.50.300:FF:001854">
    <property type="entry name" value="ABC multidrug transporter (Eurofung)"/>
    <property type="match status" value="1"/>
</dbReference>
<dbReference type="Gene3D" id="1.20.1560.10">
    <property type="entry name" value="ABC transporter type 1, transmembrane domain"/>
    <property type="match status" value="2"/>
</dbReference>
<dbReference type="Gene3D" id="3.40.50.300">
    <property type="entry name" value="P-loop containing nucleotide triphosphate hydrolases"/>
    <property type="match status" value="2"/>
</dbReference>
<dbReference type="InterPro" id="IPR003593">
    <property type="entry name" value="AAA+_ATPase"/>
</dbReference>
<dbReference type="InterPro" id="IPR011527">
    <property type="entry name" value="ABC1_TM_dom"/>
</dbReference>
<dbReference type="InterPro" id="IPR036640">
    <property type="entry name" value="ABC1_TM_sf"/>
</dbReference>
<dbReference type="InterPro" id="IPR003439">
    <property type="entry name" value="ABC_transporter-like_ATP-bd"/>
</dbReference>
<dbReference type="InterPro" id="IPR017871">
    <property type="entry name" value="ABC_transporter-like_CS"/>
</dbReference>
<dbReference type="InterPro" id="IPR050173">
    <property type="entry name" value="ABC_transporter_C-like"/>
</dbReference>
<dbReference type="InterPro" id="IPR044746">
    <property type="entry name" value="ABCC_6TM_D1"/>
</dbReference>
<dbReference type="InterPro" id="IPR044726">
    <property type="entry name" value="ABCC_6TM_D2"/>
</dbReference>
<dbReference type="InterPro" id="IPR027417">
    <property type="entry name" value="P-loop_NTPase"/>
</dbReference>
<dbReference type="InterPro" id="IPR056227">
    <property type="entry name" value="TMD0_ABC"/>
</dbReference>
<dbReference type="PANTHER" id="PTHR24223:SF269">
    <property type="entry name" value="ABC MULTIDRUG TRANSPORTER (EUROFUNG)-RELATED"/>
    <property type="match status" value="1"/>
</dbReference>
<dbReference type="PANTHER" id="PTHR24223">
    <property type="entry name" value="ATP-BINDING CASSETTE SUB-FAMILY C"/>
    <property type="match status" value="1"/>
</dbReference>
<dbReference type="Pfam" id="PF00664">
    <property type="entry name" value="ABC_membrane"/>
    <property type="match status" value="2"/>
</dbReference>
<dbReference type="Pfam" id="PF00005">
    <property type="entry name" value="ABC_tran"/>
    <property type="match status" value="2"/>
</dbReference>
<dbReference type="Pfam" id="PF24357">
    <property type="entry name" value="TMD0_ABC"/>
    <property type="match status" value="1"/>
</dbReference>
<dbReference type="SMART" id="SM00382">
    <property type="entry name" value="AAA"/>
    <property type="match status" value="2"/>
</dbReference>
<dbReference type="SUPFAM" id="SSF90123">
    <property type="entry name" value="ABC transporter transmembrane region"/>
    <property type="match status" value="2"/>
</dbReference>
<dbReference type="SUPFAM" id="SSF52540">
    <property type="entry name" value="P-loop containing nucleoside triphosphate hydrolases"/>
    <property type="match status" value="2"/>
</dbReference>
<dbReference type="PROSITE" id="PS50929">
    <property type="entry name" value="ABC_TM1F"/>
    <property type="match status" value="2"/>
</dbReference>
<dbReference type="PROSITE" id="PS00211">
    <property type="entry name" value="ABC_TRANSPORTER_1"/>
    <property type="match status" value="2"/>
</dbReference>
<dbReference type="PROSITE" id="PS50893">
    <property type="entry name" value="ABC_TRANSPORTER_2"/>
    <property type="match status" value="2"/>
</dbReference>
<evidence type="ECO:0000255" key="1"/>
<evidence type="ECO:0000255" key="2">
    <source>
        <dbReference type="PROSITE-ProRule" id="PRU00434"/>
    </source>
</evidence>
<evidence type="ECO:0000255" key="3">
    <source>
        <dbReference type="PROSITE-ProRule" id="PRU00441"/>
    </source>
</evidence>
<evidence type="ECO:0000255" key="4">
    <source>
        <dbReference type="PROSITE-ProRule" id="PRU00498"/>
    </source>
</evidence>
<evidence type="ECO:0000256" key="5">
    <source>
        <dbReference type="SAM" id="MobiDB-lite"/>
    </source>
</evidence>
<evidence type="ECO:0000303" key="6">
    <source>
    </source>
</evidence>
<evidence type="ECO:0000305" key="7"/>
<evidence type="ECO:0000305" key="8">
    <source>
    </source>
</evidence>
<keyword id="KW-0067">ATP-binding</keyword>
<keyword id="KW-1003">Cell membrane</keyword>
<keyword id="KW-0325">Glycoprotein</keyword>
<keyword id="KW-0472">Membrane</keyword>
<keyword id="KW-0547">Nucleotide-binding</keyword>
<keyword id="KW-1185">Reference proteome</keyword>
<keyword id="KW-0812">Transmembrane</keyword>
<keyword id="KW-1133">Transmembrane helix</keyword>
<keyword id="KW-0813">Transport</keyword>
<proteinExistence type="inferred from homology"/>
<organism>
    <name type="scientific">Gibberella zeae (strain ATCC MYA-4620 / CBS 123657 / FGSC 9075 / NRRL 31084 / PH-1)</name>
    <name type="common">Wheat head blight fungus</name>
    <name type="synonym">Fusarium graminearum</name>
    <dbReference type="NCBI Taxonomy" id="229533"/>
    <lineage>
        <taxon>Eukaryota</taxon>
        <taxon>Fungi</taxon>
        <taxon>Dikarya</taxon>
        <taxon>Ascomycota</taxon>
        <taxon>Pezizomycotina</taxon>
        <taxon>Sordariomycetes</taxon>
        <taxon>Hypocreomycetidae</taxon>
        <taxon>Hypocreales</taxon>
        <taxon>Nectriaceae</taxon>
        <taxon>Fusarium</taxon>
    </lineage>
</organism>
<protein>
    <recommendedName>
        <fullName evidence="6">ABC-type transporter FG02316</fullName>
    </recommendedName>
    <alternativeName>
        <fullName evidence="6">Fusahexin biosynthesis cluster protein FG02316</fullName>
    </alternativeName>
</protein>
<sequence>MNSSSCDRSFGPYAEGCRGGFDFTLLFEESILVVPITALLLLAAPFRATYLLRKHSVKVEHSYWLYCKIILCLLLLASQIAFLVCWTQSPVVTTKASLPAAALSIVASITLLGLSYVEHVYSYRPSTVLNLFLLFSVLFDATRTRTLWLQGYNRPAAITALISTVVKILMLSAETIEKRGFLRPEYRELPSEVTSGVFSHWFFSWQLPLFRVGYSHDLEIESLFPLEKHFKSSYLQTLLQTAWAKAPKKGDYDLLLVVFKTLKRPILFIIFPRLCFIGFTFCQPFLISATLSWAEKDADSNDMNQGYGLIGAWFLVFIGLAVTTGQYQHLTVRATTMVRGQLISMLYDKASDLSITAANPTAALTLMSADIERIDSGWRTAHDVWANLIEIVIAVYLLGRQLGLACLIPVGAAIFSIVGSVIAVSFVMARQAMWLEAIERRISVTSQMLGSMKGVKMCGLSEVLGTRIQAMREEELHISGKFRRLLIWNMVLAYLAPIFAPVLSFMTYSLLAQSQGGRGNLDTNRMFTSLSLFALLQEPLASFVTSLSSFMGSVGSFVRIQAFLKTDARTDDRIIQYNGETEHSLISGVSSSEEKHPVSPIQESMMKTEPSGDSPDGNAFVIRNASFGYDRNETPTLSNIDAIIPSGKLTLVVGPVGSGKSTLMKALLGEVGIMQGSVHASNSTVAYCDQTPWHMNGTVRESIIAFSRPDERWYQKVLEACALKQDLTQLPRGDLSNIGSRGLVLSGGQSQRVSLARAVYAQKSTIILDDVFSGLDAHTENAVFNNLLGSHGILRDLNTTVIVVSSRVKRLPYADHIICLDGTGTGCVQGTFDKLNESDNYVSHSDVSSPDGARSKAPSSGPASSSAPVPESSAAALAELDMELTESKKDGAGRRSGDVAIYMYYMNAIGWIPTMVFVLAICAYIFCQSFPTIWLNWWAAANAKEPFTRLGYYLGVYAMLGALSIIFLVLSTWQMIVTMVPLSGNNFHQSLLKTVLNAPMSFFAATDAGTTINRFSQDLQLIDMDLPLSALNTFATFVLCIAEMILIAVGSYYTAIAFPFLLATLWVVQHTYLRTSRQLRFMDLEAKSPLYALFTETVTGLATLRAFGWRDALEKKHHELLDRSQRPFYLLYAVQRWLTLVLDMIVTIIAVLVVVLVTQLRGKLPAGLIGVALVNIIQFSQHLKLLMTFWTTLETHIGAISRIKSFTSDTASEHEPQEKEQPPSVWPSKGTILFDQVSAGYKESEDVLKNISLNIEAGQKVGICGRTGSGKSSMVSCLFRMIDLHGGRIIVDGLDISTIPREEIRTRLVGVPQDAFLIDGSSVRLNADPAGGLTDAAIEDALRAVELWDIVTDNGGLDTSIEELHLSHGQRQLFCIGRAILRPSPIVVLDEATSSVDSRVDELVQRLVRERFSNRTVISIVHKLQSALDDFDMVVVLDAGKLQEIGHPQELLAKGPDASTFASMYQSVATEKKEDK</sequence>
<comment type="function">
    <text evidence="8">ABC-type transporter; part of the gene cluster that mediates the biosynthesis of the fusahexin, a cyclic hydrophobic hexapeptide with the amino acid sequence cyclo-(D-Ala-L-Leu-D-allo-Thr-L-Pro-D-Leu-L-Leu) that plays an important role in cell surface hydrophobicity.</text>
</comment>
<comment type="subcellular location">
    <subcellularLocation>
        <location evidence="7">Cell membrane</location>
        <topology evidence="1">Multi-pass membrane protein</topology>
    </subcellularLocation>
</comment>
<comment type="similarity">
    <text evidence="7">Belongs to the ABC transporter superfamily. ABCC family. Conjugate transporter (TC 3.A.1.208) subfamily.</text>
</comment>
<accession>I1RF50</accession>
<accession>A0A098D6L3</accession>
<accession>A0A1C3YIK3</accession>
<feature type="chain" id="PRO_0000455676" description="ABC-type transporter FG02316">
    <location>
        <begin position="1"/>
        <end position="1476"/>
    </location>
</feature>
<feature type="transmembrane region" description="Helical" evidence="1">
    <location>
        <begin position="23"/>
        <end position="43"/>
    </location>
</feature>
<feature type="transmembrane region" description="Helical" evidence="1">
    <location>
        <begin position="64"/>
        <end position="84"/>
    </location>
</feature>
<feature type="transmembrane region" description="Helical" evidence="1">
    <location>
        <begin position="97"/>
        <end position="117"/>
    </location>
</feature>
<feature type="transmembrane region" description="Helical" evidence="1">
    <location>
        <begin position="156"/>
        <end position="176"/>
    </location>
</feature>
<feature type="transmembrane region" description="Helical" evidence="1 3">
    <location>
        <begin position="266"/>
        <end position="286"/>
    </location>
</feature>
<feature type="transmembrane region" description="Helical" evidence="1 3">
    <location>
        <begin position="305"/>
        <end position="325"/>
    </location>
</feature>
<feature type="transmembrane region" description="Helical" evidence="1 3">
    <location>
        <begin position="384"/>
        <end position="404"/>
    </location>
</feature>
<feature type="transmembrane region" description="Helical" evidence="1 3">
    <location>
        <begin position="407"/>
        <end position="427"/>
    </location>
</feature>
<feature type="transmembrane region" description="Helical" evidence="1 3">
    <location>
        <begin position="485"/>
        <end position="505"/>
    </location>
</feature>
<feature type="transmembrane region" description="Helical" evidence="1 3">
    <location>
        <begin position="532"/>
        <end position="552"/>
    </location>
</feature>
<feature type="transmembrane region" description="Helical" evidence="1 3">
    <location>
        <begin position="906"/>
        <end position="926"/>
    </location>
</feature>
<feature type="transmembrane region" description="Helical" evidence="1 3">
    <location>
        <begin position="950"/>
        <end position="970"/>
    </location>
</feature>
<feature type="transmembrane region" description="Helical" evidence="1 3">
    <location>
        <begin position="1021"/>
        <end position="1041"/>
    </location>
</feature>
<feature type="transmembrane region" description="Helical" evidence="1 3">
    <location>
        <begin position="1045"/>
        <end position="1065"/>
    </location>
</feature>
<feature type="transmembrane region" description="Helical" evidence="1 3">
    <location>
        <begin position="1137"/>
        <end position="1157"/>
    </location>
</feature>
<feature type="transmembrane region" description="Helical" evidence="1 3">
    <location>
        <begin position="1167"/>
        <end position="1187"/>
    </location>
</feature>
<feature type="domain" description="ABC transmembrane type-1 1" evidence="3">
    <location>
        <begin position="274"/>
        <end position="552"/>
    </location>
</feature>
<feature type="domain" description="ABC transporter 1" evidence="2">
    <location>
        <begin position="622"/>
        <end position="847"/>
    </location>
</feature>
<feature type="domain" description="ABC transmembrane type-1 2" evidence="3">
    <location>
        <begin position="916"/>
        <end position="1195"/>
    </location>
</feature>
<feature type="domain" description="ABC transporter 2" evidence="2">
    <location>
        <begin position="1232"/>
        <end position="1464"/>
    </location>
</feature>
<feature type="region of interest" description="Disordered" evidence="5">
    <location>
        <begin position="586"/>
        <end position="615"/>
    </location>
</feature>
<feature type="region of interest" description="Disordered" evidence="5">
    <location>
        <begin position="842"/>
        <end position="870"/>
    </location>
</feature>
<feature type="compositionally biased region" description="Low complexity" evidence="5">
    <location>
        <begin position="855"/>
        <end position="870"/>
    </location>
</feature>
<feature type="binding site" evidence="2">
    <location>
        <begin position="654"/>
        <end position="661"/>
    </location>
    <ligand>
        <name>ATP</name>
        <dbReference type="ChEBI" id="CHEBI:30616"/>
    </ligand>
</feature>
<feature type="binding site" evidence="2">
    <location>
        <begin position="1265"/>
        <end position="1272"/>
    </location>
    <ligand>
        <name>ATP</name>
        <dbReference type="ChEBI" id="CHEBI:30616"/>
    </ligand>
</feature>
<feature type="glycosylation site" description="N-linked (GlcNAc...) asparagine" evidence="4">
    <location>
        <position position="2"/>
    </location>
</feature>
<feature type="glycosylation site" description="N-linked (GlcNAc...) asparagine" evidence="4">
    <location>
        <position position="624"/>
    </location>
</feature>
<feature type="glycosylation site" description="N-linked (GlcNAc...) asparagine" evidence="4">
    <location>
        <position position="682"/>
    </location>
</feature>
<feature type="glycosylation site" description="N-linked (GlcNAc...) asparagine" evidence="4">
    <location>
        <position position="696"/>
    </location>
</feature>
<feature type="glycosylation site" description="N-linked (GlcNAc...) asparagine" evidence="4">
    <location>
        <position position="798"/>
    </location>
</feature>
<feature type="glycosylation site" description="N-linked (GlcNAc...) asparagine" evidence="4">
    <location>
        <position position="836"/>
    </location>
</feature>
<feature type="glycosylation site" description="N-linked (GlcNAc...) asparagine" evidence="4">
    <location>
        <position position="1250"/>
    </location>
</feature>
<feature type="glycosylation site" description="N-linked (GlcNAc...) asparagine" evidence="4">
    <location>
        <position position="1414"/>
    </location>
</feature>
<gene>
    <name type="ORF">FG02316</name>
    <name type="ORF">FGRAMPH1_01T05577</name>
</gene>
<reference key="1">
    <citation type="journal article" date="2007" name="Science">
        <title>The Fusarium graminearum genome reveals a link between localized polymorphism and pathogen specialization.</title>
        <authorList>
            <person name="Cuomo C.A."/>
            <person name="Gueldener U."/>
            <person name="Xu J.-R."/>
            <person name="Trail F."/>
            <person name="Turgeon B.G."/>
            <person name="Di Pietro A."/>
            <person name="Walton J.D."/>
            <person name="Ma L.-J."/>
            <person name="Baker S.E."/>
            <person name="Rep M."/>
            <person name="Adam G."/>
            <person name="Antoniw J."/>
            <person name="Baldwin T."/>
            <person name="Calvo S.E."/>
            <person name="Chang Y.-L."/>
            <person name="DeCaprio D."/>
            <person name="Gale L.R."/>
            <person name="Gnerre S."/>
            <person name="Goswami R.S."/>
            <person name="Hammond-Kosack K."/>
            <person name="Harris L.J."/>
            <person name="Hilburn K."/>
            <person name="Kennell J.C."/>
            <person name="Kroken S."/>
            <person name="Magnuson J.K."/>
            <person name="Mannhaupt G."/>
            <person name="Mauceli E.W."/>
            <person name="Mewes H.-W."/>
            <person name="Mitterbauer R."/>
            <person name="Muehlbauer G."/>
            <person name="Muensterkoetter M."/>
            <person name="Nelson D."/>
            <person name="O'Donnell K."/>
            <person name="Ouellet T."/>
            <person name="Qi W."/>
            <person name="Quesneville H."/>
            <person name="Roncero M.I.G."/>
            <person name="Seong K.-Y."/>
            <person name="Tetko I.V."/>
            <person name="Urban M."/>
            <person name="Waalwijk C."/>
            <person name="Ward T.J."/>
            <person name="Yao J."/>
            <person name="Birren B.W."/>
            <person name="Kistler H.C."/>
        </authorList>
    </citation>
    <scope>NUCLEOTIDE SEQUENCE [LARGE SCALE GENOMIC DNA]</scope>
    <source>
        <strain>ATCC MYA-4620 / CBS 123657 / FGSC 9075 / NRRL 31084 / PH-1</strain>
    </source>
</reference>
<reference key="2">
    <citation type="journal article" date="2010" name="Nature">
        <title>Comparative genomics reveals mobile pathogenicity chromosomes in Fusarium.</title>
        <authorList>
            <person name="Ma L.-J."/>
            <person name="van der Does H.C."/>
            <person name="Borkovich K.A."/>
            <person name="Coleman J.J."/>
            <person name="Daboussi M.-J."/>
            <person name="Di Pietro A."/>
            <person name="Dufresne M."/>
            <person name="Freitag M."/>
            <person name="Grabherr M."/>
            <person name="Henrissat B."/>
            <person name="Houterman P.M."/>
            <person name="Kang S."/>
            <person name="Shim W.-B."/>
            <person name="Woloshuk C."/>
            <person name="Xie X."/>
            <person name="Xu J.-R."/>
            <person name="Antoniw J."/>
            <person name="Baker S.E."/>
            <person name="Bluhm B.H."/>
            <person name="Breakspear A."/>
            <person name="Brown D.W."/>
            <person name="Butchko R.A.E."/>
            <person name="Chapman S."/>
            <person name="Coulson R."/>
            <person name="Coutinho P.M."/>
            <person name="Danchin E.G.J."/>
            <person name="Diener A."/>
            <person name="Gale L.R."/>
            <person name="Gardiner D.M."/>
            <person name="Goff S."/>
            <person name="Hammond-Kosack K.E."/>
            <person name="Hilburn K."/>
            <person name="Hua-Van A."/>
            <person name="Jonkers W."/>
            <person name="Kazan K."/>
            <person name="Kodira C.D."/>
            <person name="Koehrsen M."/>
            <person name="Kumar L."/>
            <person name="Lee Y.-H."/>
            <person name="Li L."/>
            <person name="Manners J.M."/>
            <person name="Miranda-Saavedra D."/>
            <person name="Mukherjee M."/>
            <person name="Park G."/>
            <person name="Park J."/>
            <person name="Park S.-Y."/>
            <person name="Proctor R.H."/>
            <person name="Regev A."/>
            <person name="Ruiz-Roldan M.C."/>
            <person name="Sain D."/>
            <person name="Sakthikumar S."/>
            <person name="Sykes S."/>
            <person name="Schwartz D.C."/>
            <person name="Turgeon B.G."/>
            <person name="Wapinski I."/>
            <person name="Yoder O."/>
            <person name="Young S."/>
            <person name="Zeng Q."/>
            <person name="Zhou S."/>
            <person name="Galagan J."/>
            <person name="Cuomo C.A."/>
            <person name="Kistler H.C."/>
            <person name="Rep M."/>
        </authorList>
    </citation>
    <scope>GENOME REANNOTATION</scope>
    <source>
        <strain>ATCC MYA-4620 / CBS 123657 / FGSC 9075 / NRRL 31084 / PH-1</strain>
    </source>
</reference>
<reference key="3">
    <citation type="journal article" date="2015" name="BMC Genomics">
        <title>The completed genome sequence of the pathogenic ascomycete fungus Fusarium graminearum.</title>
        <authorList>
            <person name="King R."/>
            <person name="Urban M."/>
            <person name="Hammond-Kosack M.C.U."/>
            <person name="Hassani-Pak K."/>
            <person name="Hammond-Kosack K.E."/>
        </authorList>
    </citation>
    <scope>NUCLEOTIDE SEQUENCE [LARGE SCALE GENOMIC DNA]</scope>
    <source>
        <strain>ATCC MYA-4620 / CBS 123657 / FGSC 9075 / NRRL 31084 / PH-1</strain>
    </source>
</reference>
<reference key="4">
    <citation type="journal article" date="2021" name="J. Nat. Prod.">
        <title>Cyclic, hydrophobic hexapeptide fusahexin is the product of a nonribosomal peptide synthetase in Fusarium graminearum.</title>
        <authorList>
            <person name="Westphal K.R."/>
            <person name="Bachleitner S."/>
            <person name="Severinsen M.M."/>
            <person name="Brundtoe M.L."/>
            <person name="Hansen F.T."/>
            <person name="Soerensen T."/>
            <person name="Wollenberg R.D."/>
            <person name="Lysoee E."/>
            <person name="Studt L."/>
            <person name="Soerensen J.L."/>
            <person name="Sondergaard T.E."/>
            <person name="Wimmer R."/>
        </authorList>
    </citation>
    <scope>IDENTIFICATION</scope>
</reference>